<gene>
    <name evidence="1" type="primary">gatC</name>
    <name type="ordered locus">DET1334</name>
</gene>
<evidence type="ECO:0000255" key="1">
    <source>
        <dbReference type="HAMAP-Rule" id="MF_00122"/>
    </source>
</evidence>
<proteinExistence type="inferred from homology"/>
<name>GATC_DEHM1</name>
<sequence length="95" mass="10885">MKLNREDVLHIARLAKLGLEEDEINRLSKELSALLEHFEVLQQVDTTGVEPTAQSTPVKSVLKEDIIKPSYDREEILSNAPRREGDYVRIRAVME</sequence>
<organism>
    <name type="scientific">Dehalococcoides mccartyi (strain ATCC BAA-2266 / KCTC 15142 / 195)</name>
    <name type="common">Dehalococcoides ethenogenes (strain 195)</name>
    <dbReference type="NCBI Taxonomy" id="243164"/>
    <lineage>
        <taxon>Bacteria</taxon>
        <taxon>Bacillati</taxon>
        <taxon>Chloroflexota</taxon>
        <taxon>Dehalococcoidia</taxon>
        <taxon>Dehalococcoidales</taxon>
        <taxon>Dehalococcoidaceae</taxon>
        <taxon>Dehalococcoides</taxon>
    </lineage>
</organism>
<comment type="function">
    <text evidence="1">Allows the formation of correctly charged Asn-tRNA(Asn) or Gln-tRNA(Gln) through the transamidation of misacylated Asp-tRNA(Asn) or Glu-tRNA(Gln) in organisms which lack either or both of asparaginyl-tRNA or glutaminyl-tRNA synthetases. The reaction takes place in the presence of glutamine and ATP through an activated phospho-Asp-tRNA(Asn) or phospho-Glu-tRNA(Gln).</text>
</comment>
<comment type="catalytic activity">
    <reaction evidence="1">
        <text>L-glutamyl-tRNA(Gln) + L-glutamine + ATP + H2O = L-glutaminyl-tRNA(Gln) + L-glutamate + ADP + phosphate + H(+)</text>
        <dbReference type="Rhea" id="RHEA:17521"/>
        <dbReference type="Rhea" id="RHEA-COMP:9681"/>
        <dbReference type="Rhea" id="RHEA-COMP:9684"/>
        <dbReference type="ChEBI" id="CHEBI:15377"/>
        <dbReference type="ChEBI" id="CHEBI:15378"/>
        <dbReference type="ChEBI" id="CHEBI:29985"/>
        <dbReference type="ChEBI" id="CHEBI:30616"/>
        <dbReference type="ChEBI" id="CHEBI:43474"/>
        <dbReference type="ChEBI" id="CHEBI:58359"/>
        <dbReference type="ChEBI" id="CHEBI:78520"/>
        <dbReference type="ChEBI" id="CHEBI:78521"/>
        <dbReference type="ChEBI" id="CHEBI:456216"/>
    </reaction>
</comment>
<comment type="catalytic activity">
    <reaction evidence="1">
        <text>L-aspartyl-tRNA(Asn) + L-glutamine + ATP + H2O = L-asparaginyl-tRNA(Asn) + L-glutamate + ADP + phosphate + 2 H(+)</text>
        <dbReference type="Rhea" id="RHEA:14513"/>
        <dbReference type="Rhea" id="RHEA-COMP:9674"/>
        <dbReference type="Rhea" id="RHEA-COMP:9677"/>
        <dbReference type="ChEBI" id="CHEBI:15377"/>
        <dbReference type="ChEBI" id="CHEBI:15378"/>
        <dbReference type="ChEBI" id="CHEBI:29985"/>
        <dbReference type="ChEBI" id="CHEBI:30616"/>
        <dbReference type="ChEBI" id="CHEBI:43474"/>
        <dbReference type="ChEBI" id="CHEBI:58359"/>
        <dbReference type="ChEBI" id="CHEBI:78515"/>
        <dbReference type="ChEBI" id="CHEBI:78516"/>
        <dbReference type="ChEBI" id="CHEBI:456216"/>
    </reaction>
</comment>
<comment type="subunit">
    <text evidence="1">Heterotrimer of A, B and C subunits.</text>
</comment>
<comment type="similarity">
    <text evidence="1">Belongs to the GatC family.</text>
</comment>
<dbReference type="EC" id="6.3.5.-" evidence="1"/>
<dbReference type="EMBL" id="CP000027">
    <property type="protein sequence ID" value="AAW39443.1"/>
    <property type="molecule type" value="Genomic_DNA"/>
</dbReference>
<dbReference type="RefSeq" id="WP_010937022.1">
    <property type="nucleotide sequence ID" value="NC_002936.3"/>
</dbReference>
<dbReference type="SMR" id="Q3Z6V4"/>
<dbReference type="FunCoup" id="Q3Z6V4">
    <property type="interactions" value="319"/>
</dbReference>
<dbReference type="STRING" id="243164.DET1334"/>
<dbReference type="GeneID" id="3229403"/>
<dbReference type="KEGG" id="det:DET1334"/>
<dbReference type="eggNOG" id="COG0721">
    <property type="taxonomic scope" value="Bacteria"/>
</dbReference>
<dbReference type="HOGENOM" id="CLU_105899_1_2_0"/>
<dbReference type="InParanoid" id="Q3Z6V4"/>
<dbReference type="Proteomes" id="UP000008289">
    <property type="component" value="Chromosome"/>
</dbReference>
<dbReference type="GO" id="GO:0030956">
    <property type="term" value="C:glutamyl-tRNA(Gln) amidotransferase complex"/>
    <property type="evidence" value="ECO:0007669"/>
    <property type="project" value="TreeGrafter"/>
</dbReference>
<dbReference type="GO" id="GO:0050566">
    <property type="term" value="F:asparaginyl-tRNA synthase (glutamine-hydrolyzing) activity"/>
    <property type="evidence" value="ECO:0007669"/>
    <property type="project" value="RHEA"/>
</dbReference>
<dbReference type="GO" id="GO:0005524">
    <property type="term" value="F:ATP binding"/>
    <property type="evidence" value="ECO:0007669"/>
    <property type="project" value="UniProtKB-KW"/>
</dbReference>
<dbReference type="GO" id="GO:0050567">
    <property type="term" value="F:glutaminyl-tRNA synthase (glutamine-hydrolyzing) activity"/>
    <property type="evidence" value="ECO:0007669"/>
    <property type="project" value="UniProtKB-UniRule"/>
</dbReference>
<dbReference type="GO" id="GO:0070681">
    <property type="term" value="P:glutaminyl-tRNAGln biosynthesis via transamidation"/>
    <property type="evidence" value="ECO:0007669"/>
    <property type="project" value="TreeGrafter"/>
</dbReference>
<dbReference type="GO" id="GO:0006450">
    <property type="term" value="P:regulation of translational fidelity"/>
    <property type="evidence" value="ECO:0007669"/>
    <property type="project" value="InterPro"/>
</dbReference>
<dbReference type="GO" id="GO:0006412">
    <property type="term" value="P:translation"/>
    <property type="evidence" value="ECO:0007669"/>
    <property type="project" value="UniProtKB-UniRule"/>
</dbReference>
<dbReference type="Gene3D" id="1.10.20.60">
    <property type="entry name" value="Glu-tRNAGln amidotransferase C subunit, N-terminal domain"/>
    <property type="match status" value="1"/>
</dbReference>
<dbReference type="HAMAP" id="MF_00122">
    <property type="entry name" value="GatC"/>
    <property type="match status" value="1"/>
</dbReference>
<dbReference type="InterPro" id="IPR036113">
    <property type="entry name" value="Asp/Glu-ADT_sf_sub_c"/>
</dbReference>
<dbReference type="InterPro" id="IPR003837">
    <property type="entry name" value="GatC"/>
</dbReference>
<dbReference type="NCBIfam" id="TIGR00135">
    <property type="entry name" value="gatC"/>
    <property type="match status" value="1"/>
</dbReference>
<dbReference type="PANTHER" id="PTHR15004">
    <property type="entry name" value="GLUTAMYL-TRNA(GLN) AMIDOTRANSFERASE SUBUNIT C, MITOCHONDRIAL"/>
    <property type="match status" value="1"/>
</dbReference>
<dbReference type="PANTHER" id="PTHR15004:SF0">
    <property type="entry name" value="GLUTAMYL-TRNA(GLN) AMIDOTRANSFERASE SUBUNIT C, MITOCHONDRIAL"/>
    <property type="match status" value="1"/>
</dbReference>
<dbReference type="Pfam" id="PF02686">
    <property type="entry name" value="GatC"/>
    <property type="match status" value="1"/>
</dbReference>
<dbReference type="SUPFAM" id="SSF141000">
    <property type="entry name" value="Glu-tRNAGln amidotransferase C subunit"/>
    <property type="match status" value="1"/>
</dbReference>
<accession>Q3Z6V4</accession>
<protein>
    <recommendedName>
        <fullName evidence="1">Aspartyl/glutamyl-tRNA(Asn/Gln) amidotransferase subunit C</fullName>
        <shortName evidence="1">Asp/Glu-ADT subunit C</shortName>
        <ecNumber evidence="1">6.3.5.-</ecNumber>
    </recommendedName>
</protein>
<keyword id="KW-0067">ATP-binding</keyword>
<keyword id="KW-0436">Ligase</keyword>
<keyword id="KW-0547">Nucleotide-binding</keyword>
<keyword id="KW-0648">Protein biosynthesis</keyword>
<reference key="1">
    <citation type="journal article" date="2005" name="Science">
        <title>Genome sequence of the PCE-dechlorinating bacterium Dehalococcoides ethenogenes.</title>
        <authorList>
            <person name="Seshadri R."/>
            <person name="Adrian L."/>
            <person name="Fouts D.E."/>
            <person name="Eisen J.A."/>
            <person name="Phillippy A.M."/>
            <person name="Methe B.A."/>
            <person name="Ward N.L."/>
            <person name="Nelson W.C."/>
            <person name="DeBoy R.T."/>
            <person name="Khouri H.M."/>
            <person name="Kolonay J.F."/>
            <person name="Dodson R.J."/>
            <person name="Daugherty S.C."/>
            <person name="Brinkac L.M."/>
            <person name="Sullivan S.A."/>
            <person name="Madupu R."/>
            <person name="Nelson K.E."/>
            <person name="Kang K.H."/>
            <person name="Impraim M."/>
            <person name="Tran K."/>
            <person name="Robinson J.M."/>
            <person name="Forberger H.A."/>
            <person name="Fraser C.M."/>
            <person name="Zinder S.H."/>
            <person name="Heidelberg J.F."/>
        </authorList>
    </citation>
    <scope>NUCLEOTIDE SEQUENCE [LARGE SCALE GENOMIC DNA]</scope>
    <source>
        <strain>ATCC BAA-2266 / KCTC 15142 / 195</strain>
    </source>
</reference>
<feature type="chain" id="PRO_1000071385" description="Aspartyl/glutamyl-tRNA(Asn/Gln) amidotransferase subunit C">
    <location>
        <begin position="1"/>
        <end position="95"/>
    </location>
</feature>